<feature type="chain" id="PRO_0000328620" description="Peroxisomal multifunctional enzyme A">
    <location>
        <begin position="1"/>
        <end position="441"/>
    </location>
</feature>
<feature type="domain" description="SCP2">
    <location>
        <begin position="331"/>
        <end position="440"/>
    </location>
</feature>
<feature type="region of interest" description="3-hydroxyacyl-CoA dehydrogenase">
    <location>
        <begin position="1"/>
        <end position="302"/>
    </location>
</feature>
<feature type="active site" description="Proton acceptor" evidence="1">
    <location>
        <position position="162"/>
    </location>
</feature>
<feature type="binding site" evidence="1">
    <location>
        <begin position="11"/>
        <end position="35"/>
    </location>
    <ligand>
        <name>NAD(+)</name>
        <dbReference type="ChEBI" id="CHEBI:57540"/>
    </ligand>
</feature>
<feature type="binding site" evidence="1">
    <location>
        <position position="19"/>
    </location>
    <ligand>
        <name>NAD(+)</name>
        <dbReference type="ChEBI" id="CHEBI:57540"/>
    </ligand>
</feature>
<feature type="binding site" evidence="1">
    <location>
        <position position="38"/>
    </location>
    <ligand>
        <name>NAD(+)</name>
        <dbReference type="ChEBI" id="CHEBI:57540"/>
    </ligand>
</feature>
<feature type="binding site" evidence="1">
    <location>
        <begin position="73"/>
        <end position="74"/>
    </location>
    <ligand>
        <name>NAD(+)</name>
        <dbReference type="ChEBI" id="CHEBI:57540"/>
    </ligand>
</feature>
<feature type="binding site" evidence="1">
    <location>
        <position position="97"/>
    </location>
    <ligand>
        <name>NAD(+)</name>
        <dbReference type="ChEBI" id="CHEBI:57540"/>
    </ligand>
</feature>
<feature type="binding site" evidence="1">
    <location>
        <position position="149"/>
    </location>
    <ligand>
        <name>substrate</name>
    </ligand>
</feature>
<feature type="binding site" evidence="1">
    <location>
        <begin position="162"/>
        <end position="166"/>
    </location>
    <ligand>
        <name>NAD(+)</name>
        <dbReference type="ChEBI" id="CHEBI:57540"/>
    </ligand>
</feature>
<feature type="binding site" evidence="1">
    <location>
        <begin position="194"/>
        <end position="197"/>
    </location>
    <ligand>
        <name>NAD(+)</name>
        <dbReference type="ChEBI" id="CHEBI:57540"/>
    </ligand>
</feature>
<feature type="binding site" evidence="1">
    <location>
        <position position="412"/>
    </location>
    <ligand>
        <name>substrate</name>
    </ligand>
</feature>
<name>MFEA_DICDI</name>
<gene>
    <name type="primary">mfeA</name>
    <name type="synonym">mfe1</name>
    <name type="ORF">DDB_G0291247</name>
</gene>
<sequence>MALNFKDKVVIVTGAGGGIGKVYALEFAKRGAKVVVNDLGGSHTGQGSSSKAADKVVEEIKAAGGTAVANYDSVEDGEKIVQTAMDSFGGVDILINNAGILRDVSFGKMTDGDWDLVYRVHAKGAYKLSRAAWNHMREKNFGRIIMTSSAAGLYGNFGQANYGSMKMALVGLSNTLAQEGKSKNIHCNTIAPIAASRLTESVMPPEILEQMKPDYIVPLVLYLCHQDTTETGGVFEVGAGWVSKVRLQRSAGVYMKDLTPEKIKDNWAQIESFDNPSYPTSASESVSGILAAVNSKPADGESVLVRPPKVAVPKALAATPSGSVVVDGYNASKIFTTIQGNIGAKGAELVKKINGIYLINIKKGTNTQAWALDLKNGSGSIVVGAGSTKPNVTITVSDEDFVDIMTGKLNAQSAFTKGKLKISGNMGLATKLGALMQGSKL</sequence>
<evidence type="ECO:0000250" key="1"/>
<evidence type="ECO:0000269" key="2">
    <source>
    </source>
</evidence>
<evidence type="ECO:0000305" key="3"/>
<comment type="function">
    <text evidence="2">Enzyme acting on the peroxisomal beta-oxidation pathway for fatty acids. Protects the cells from the increase of the harmful xenobiotic fatty acids incorporated from their diets and optimizes cellular lipid composition for proper development.</text>
</comment>
<comment type="catalytic activity">
    <reaction>
        <text>a (3S)-3-hydroxyacyl-CoA + NAD(+) = a 3-oxoacyl-CoA + NADH + H(+)</text>
        <dbReference type="Rhea" id="RHEA:22432"/>
        <dbReference type="ChEBI" id="CHEBI:15378"/>
        <dbReference type="ChEBI" id="CHEBI:57318"/>
        <dbReference type="ChEBI" id="CHEBI:57540"/>
        <dbReference type="ChEBI" id="CHEBI:57945"/>
        <dbReference type="ChEBI" id="CHEBI:90726"/>
        <dbReference type="EC" id="1.1.1.35"/>
    </reaction>
</comment>
<comment type="pathway">
    <text>Lipid metabolism; fatty acid beta-oxidation.</text>
</comment>
<comment type="subcellular location">
    <subcellularLocation>
        <location evidence="2">Peroxisome</location>
    </subcellularLocation>
</comment>
<comment type="similarity">
    <text evidence="3">Belongs to the short-chain dehydrogenases/reductases (SDR) family.</text>
</comment>
<dbReference type="EC" id="1.1.1.35"/>
<dbReference type="EMBL" id="AB042104">
    <property type="protein sequence ID" value="BAA94961.1"/>
    <property type="molecule type" value="mRNA"/>
</dbReference>
<dbReference type="EMBL" id="AAFI02000177">
    <property type="protein sequence ID" value="EAL61607.1"/>
    <property type="molecule type" value="Genomic_DNA"/>
</dbReference>
<dbReference type="RefSeq" id="XP_635235.1">
    <property type="nucleotide sequence ID" value="XM_630143.1"/>
</dbReference>
<dbReference type="SMR" id="Q9NKW1"/>
<dbReference type="FunCoup" id="Q9NKW1">
    <property type="interactions" value="58"/>
</dbReference>
<dbReference type="STRING" id="44689.Q9NKW1"/>
<dbReference type="GlyGen" id="Q9NKW1">
    <property type="glycosylation" value="1 site"/>
</dbReference>
<dbReference type="PaxDb" id="44689-DDB0201628"/>
<dbReference type="EnsemblProtists" id="EAL61607">
    <property type="protein sequence ID" value="EAL61607"/>
    <property type="gene ID" value="DDB_G0291247"/>
</dbReference>
<dbReference type="GeneID" id="8628181"/>
<dbReference type="KEGG" id="ddi:DDB_G0291247"/>
<dbReference type="dictyBase" id="DDB_G0291247">
    <property type="gene designation" value="mfeA"/>
</dbReference>
<dbReference type="VEuPathDB" id="AmoebaDB:DDB_G0291247"/>
<dbReference type="eggNOG" id="ENOG502QPX4">
    <property type="taxonomic scope" value="Eukaryota"/>
</dbReference>
<dbReference type="HOGENOM" id="CLU_010194_14_2_1"/>
<dbReference type="InParanoid" id="Q9NKW1"/>
<dbReference type="OMA" id="STNFFDM"/>
<dbReference type="PhylomeDB" id="Q9NKW1"/>
<dbReference type="UniPathway" id="UPA00659"/>
<dbReference type="PRO" id="PR:Q9NKW1"/>
<dbReference type="Proteomes" id="UP000002195">
    <property type="component" value="Chromosome 6"/>
</dbReference>
<dbReference type="GO" id="GO:0005777">
    <property type="term" value="C:peroxisome"/>
    <property type="evidence" value="ECO:0000314"/>
    <property type="project" value="dictyBase"/>
</dbReference>
<dbReference type="GO" id="GO:0003857">
    <property type="term" value="F:3-hydroxyacyl-CoA dehydrogenase activity"/>
    <property type="evidence" value="ECO:0000318"/>
    <property type="project" value="GO_Central"/>
</dbReference>
<dbReference type="GO" id="GO:0004300">
    <property type="term" value="F:enoyl-CoA hydratase activity"/>
    <property type="evidence" value="ECO:0000318"/>
    <property type="project" value="GO_Central"/>
</dbReference>
<dbReference type="GO" id="GO:0140582">
    <property type="term" value="P:adenylate cyclase-activating G protein-coupled cAMP receptor signaling pathway"/>
    <property type="evidence" value="ECO:0000315"/>
    <property type="project" value="dictyBase"/>
</dbReference>
<dbReference type="GO" id="GO:0006635">
    <property type="term" value="P:fatty acid beta-oxidation"/>
    <property type="evidence" value="ECO:0000318"/>
    <property type="project" value="GO_Central"/>
</dbReference>
<dbReference type="GO" id="GO:0006631">
    <property type="term" value="P:fatty acid metabolic process"/>
    <property type="evidence" value="ECO:0000315"/>
    <property type="project" value="dictyBase"/>
</dbReference>
<dbReference type="GO" id="GO:0030587">
    <property type="term" value="P:sorocarp development"/>
    <property type="evidence" value="ECO:0000315"/>
    <property type="project" value="dictyBase"/>
</dbReference>
<dbReference type="CDD" id="cd05353">
    <property type="entry name" value="hydroxyacyl-CoA-like_DH_SDR_c-like"/>
    <property type="match status" value="1"/>
</dbReference>
<dbReference type="FunFam" id="3.30.1050.10:FF:000004">
    <property type="entry name" value="Hydroxysteroid 17-beta dehydrogenase 4"/>
    <property type="match status" value="1"/>
</dbReference>
<dbReference type="FunFam" id="3.40.50.720:FF:000185">
    <property type="entry name" value="peroxisomal multifunctional enzyme type 2"/>
    <property type="match status" value="1"/>
</dbReference>
<dbReference type="Gene3D" id="1.10.287.4290">
    <property type="match status" value="1"/>
</dbReference>
<dbReference type="Gene3D" id="3.40.50.720">
    <property type="entry name" value="NAD(P)-binding Rossmann-like Domain"/>
    <property type="match status" value="1"/>
</dbReference>
<dbReference type="Gene3D" id="3.30.1050.10">
    <property type="entry name" value="SCP2 sterol-binding domain"/>
    <property type="match status" value="1"/>
</dbReference>
<dbReference type="InterPro" id="IPR036291">
    <property type="entry name" value="NAD(P)-bd_dom_sf"/>
</dbReference>
<dbReference type="InterPro" id="IPR051687">
    <property type="entry name" value="Peroxisomal_Beta-Oxidation"/>
</dbReference>
<dbReference type="InterPro" id="IPR003033">
    <property type="entry name" value="SCP2_sterol-bd_dom"/>
</dbReference>
<dbReference type="InterPro" id="IPR036527">
    <property type="entry name" value="SCP2_sterol-bd_dom_sf"/>
</dbReference>
<dbReference type="InterPro" id="IPR002347">
    <property type="entry name" value="SDR_fam"/>
</dbReference>
<dbReference type="PANTHER" id="PTHR45024">
    <property type="entry name" value="DEHYDROGENASES, SHORT CHAIN"/>
    <property type="match status" value="1"/>
</dbReference>
<dbReference type="PANTHER" id="PTHR45024:SF2">
    <property type="entry name" value="SCP2 DOMAIN-CONTAINING PROTEIN"/>
    <property type="match status" value="1"/>
</dbReference>
<dbReference type="Pfam" id="PF00106">
    <property type="entry name" value="adh_short"/>
    <property type="match status" value="1"/>
</dbReference>
<dbReference type="Pfam" id="PF02036">
    <property type="entry name" value="SCP2"/>
    <property type="match status" value="1"/>
</dbReference>
<dbReference type="PRINTS" id="PR00081">
    <property type="entry name" value="GDHRDH"/>
</dbReference>
<dbReference type="PRINTS" id="PR00080">
    <property type="entry name" value="SDRFAMILY"/>
</dbReference>
<dbReference type="SMART" id="SM00822">
    <property type="entry name" value="PKS_KR"/>
    <property type="match status" value="1"/>
</dbReference>
<dbReference type="SUPFAM" id="SSF51735">
    <property type="entry name" value="NAD(P)-binding Rossmann-fold domains"/>
    <property type="match status" value="1"/>
</dbReference>
<dbReference type="SUPFAM" id="SSF55718">
    <property type="entry name" value="SCP-like"/>
    <property type="match status" value="1"/>
</dbReference>
<accession>Q9NKW1</accession>
<accession>Q54EK5</accession>
<protein>
    <recommendedName>
        <fullName>Peroxisomal multifunctional enzyme A</fullName>
        <shortName>MFE-A</shortName>
    </recommendedName>
    <alternativeName>
        <fullName>MFE-1</fullName>
    </alternativeName>
    <domain>
        <recommendedName>
            <fullName>3-hydroxyacyl-CoA dehydrogenase</fullName>
            <ecNumber>1.1.1.35</ecNumber>
        </recommendedName>
    </domain>
</protein>
<proteinExistence type="evidence at transcript level"/>
<organism>
    <name type="scientific">Dictyostelium discoideum</name>
    <name type="common">Social amoeba</name>
    <dbReference type="NCBI Taxonomy" id="44689"/>
    <lineage>
        <taxon>Eukaryota</taxon>
        <taxon>Amoebozoa</taxon>
        <taxon>Evosea</taxon>
        <taxon>Eumycetozoa</taxon>
        <taxon>Dictyostelia</taxon>
        <taxon>Dictyosteliales</taxon>
        <taxon>Dictyosteliaceae</taxon>
        <taxon>Dictyostelium</taxon>
    </lineage>
</organism>
<keyword id="KW-0276">Fatty acid metabolism</keyword>
<keyword id="KW-0443">Lipid metabolism</keyword>
<keyword id="KW-0520">NAD</keyword>
<keyword id="KW-0560">Oxidoreductase</keyword>
<keyword id="KW-0576">Peroxisome</keyword>
<keyword id="KW-1185">Reference proteome</keyword>
<reference key="1">
    <citation type="journal article" date="2003" name="Eukaryot. Cell">
        <title>MFE1, a member of the peroxisomal hydroxyacyl coenzyme A dehydrogenase family, affects fatty acid metabolism necessary for morphogenesis in Dictyostelium spp.</title>
        <authorList>
            <person name="Matsuoka S."/>
            <person name="Saito T."/>
            <person name="Kuwayama H."/>
            <person name="Morita N."/>
            <person name="Ochiai H."/>
            <person name="Maeda M."/>
        </authorList>
    </citation>
    <scope>NUCLEOTIDE SEQUENCE [MRNA]</scope>
    <scope>FUNCTION</scope>
    <scope>SUBCELLULAR LOCATION</scope>
    <source>
        <strain>AX4</strain>
    </source>
</reference>
<reference key="2">
    <citation type="journal article" date="2005" name="Nature">
        <title>The genome of the social amoeba Dictyostelium discoideum.</title>
        <authorList>
            <person name="Eichinger L."/>
            <person name="Pachebat J.A."/>
            <person name="Gloeckner G."/>
            <person name="Rajandream M.A."/>
            <person name="Sucgang R."/>
            <person name="Berriman M."/>
            <person name="Song J."/>
            <person name="Olsen R."/>
            <person name="Szafranski K."/>
            <person name="Xu Q."/>
            <person name="Tunggal B."/>
            <person name="Kummerfeld S."/>
            <person name="Madera M."/>
            <person name="Konfortov B.A."/>
            <person name="Rivero F."/>
            <person name="Bankier A.T."/>
            <person name="Lehmann R."/>
            <person name="Hamlin N."/>
            <person name="Davies R."/>
            <person name="Gaudet P."/>
            <person name="Fey P."/>
            <person name="Pilcher K."/>
            <person name="Chen G."/>
            <person name="Saunders D."/>
            <person name="Sodergren E.J."/>
            <person name="Davis P."/>
            <person name="Kerhornou A."/>
            <person name="Nie X."/>
            <person name="Hall N."/>
            <person name="Anjard C."/>
            <person name="Hemphill L."/>
            <person name="Bason N."/>
            <person name="Farbrother P."/>
            <person name="Desany B."/>
            <person name="Just E."/>
            <person name="Morio T."/>
            <person name="Rost R."/>
            <person name="Churcher C.M."/>
            <person name="Cooper J."/>
            <person name="Haydock S."/>
            <person name="van Driessche N."/>
            <person name="Cronin A."/>
            <person name="Goodhead I."/>
            <person name="Muzny D.M."/>
            <person name="Mourier T."/>
            <person name="Pain A."/>
            <person name="Lu M."/>
            <person name="Harper D."/>
            <person name="Lindsay R."/>
            <person name="Hauser H."/>
            <person name="James K.D."/>
            <person name="Quiles M."/>
            <person name="Madan Babu M."/>
            <person name="Saito T."/>
            <person name="Buchrieser C."/>
            <person name="Wardroper A."/>
            <person name="Felder M."/>
            <person name="Thangavelu M."/>
            <person name="Johnson D."/>
            <person name="Knights A."/>
            <person name="Loulseged H."/>
            <person name="Mungall K.L."/>
            <person name="Oliver K."/>
            <person name="Price C."/>
            <person name="Quail M.A."/>
            <person name="Urushihara H."/>
            <person name="Hernandez J."/>
            <person name="Rabbinowitsch E."/>
            <person name="Steffen D."/>
            <person name="Sanders M."/>
            <person name="Ma J."/>
            <person name="Kohara Y."/>
            <person name="Sharp S."/>
            <person name="Simmonds M.N."/>
            <person name="Spiegler S."/>
            <person name="Tivey A."/>
            <person name="Sugano S."/>
            <person name="White B."/>
            <person name="Walker D."/>
            <person name="Woodward J.R."/>
            <person name="Winckler T."/>
            <person name="Tanaka Y."/>
            <person name="Shaulsky G."/>
            <person name="Schleicher M."/>
            <person name="Weinstock G.M."/>
            <person name="Rosenthal A."/>
            <person name="Cox E.C."/>
            <person name="Chisholm R.L."/>
            <person name="Gibbs R.A."/>
            <person name="Loomis W.F."/>
            <person name="Platzer M."/>
            <person name="Kay R.R."/>
            <person name="Williams J.G."/>
            <person name="Dear P.H."/>
            <person name="Noegel A.A."/>
            <person name="Barrell B.G."/>
            <person name="Kuspa A."/>
        </authorList>
    </citation>
    <scope>NUCLEOTIDE SEQUENCE [LARGE SCALE GENOMIC DNA]</scope>
    <source>
        <strain>AX4</strain>
    </source>
</reference>